<feature type="chain" id="PRO_0000279750" description="Vacuolar ATPase assembly protein VMA22">
    <location>
        <begin position="1"/>
        <end position="206"/>
    </location>
</feature>
<feature type="region of interest" description="Disordered" evidence="4">
    <location>
        <begin position="109"/>
        <end position="140"/>
    </location>
</feature>
<feature type="coiled-coil region" evidence="3">
    <location>
        <begin position="4"/>
        <end position="37"/>
    </location>
</feature>
<feature type="coiled-coil region" evidence="3">
    <location>
        <begin position="178"/>
        <end position="206"/>
    </location>
</feature>
<feature type="compositionally biased region" description="Basic and acidic residues" evidence="4">
    <location>
        <begin position="114"/>
        <end position="140"/>
    </location>
</feature>
<comment type="function">
    <text evidence="2">Accessory component of the proton-transporting vacuolar (V)-ATPase protein pump involved in intracellular iron homeostasis. May be involved in Golgi homeostasis.</text>
</comment>
<comment type="subunit">
    <text evidence="2">Accessory component of the multisubunit proton-transporting vacuolar (V)-ATPase protein pump.</text>
</comment>
<comment type="subcellular location">
    <subcellularLocation>
        <location evidence="1">Endosome</location>
    </subcellularLocation>
    <subcellularLocation>
        <location evidence="1">Lysosome</location>
    </subcellularLocation>
    <subcellularLocation>
        <location evidence="2">Endoplasmic reticulum-Golgi intermediate compartment</location>
    </subcellularLocation>
    <subcellularLocation>
        <location evidence="2">Cytoplasmic vesicle</location>
        <location evidence="2">COPI-coated vesicle</location>
    </subcellularLocation>
    <subcellularLocation>
        <location evidence="2">Endoplasmic reticulum</location>
    </subcellularLocation>
</comment>
<proteinExistence type="evidence at transcript level"/>
<keyword id="KW-0175">Coiled coil</keyword>
<keyword id="KW-0968">Cytoplasmic vesicle</keyword>
<keyword id="KW-0256">Endoplasmic reticulum</keyword>
<keyword id="KW-0967">Endosome</keyword>
<keyword id="KW-0458">Lysosome</keyword>
<keyword id="KW-1185">Reference proteome</keyword>
<gene>
    <name type="primary">vma22</name>
    <name type="synonym">ccdc115</name>
    <name type="ORF">zgc:113121</name>
</gene>
<dbReference type="EMBL" id="BC090281">
    <property type="protein sequence ID" value="AAH90281.1"/>
    <property type="molecule type" value="mRNA"/>
</dbReference>
<dbReference type="RefSeq" id="NP_001013313.1">
    <property type="nucleotide sequence ID" value="NM_001013295.2"/>
</dbReference>
<dbReference type="SMR" id="Q5EAR6"/>
<dbReference type="FunCoup" id="Q5EAR6">
    <property type="interactions" value="1556"/>
</dbReference>
<dbReference type="STRING" id="7955.ENSDARP00000047014"/>
<dbReference type="PaxDb" id="7955-ENSDARP00000047014"/>
<dbReference type="GeneID" id="503608"/>
<dbReference type="KEGG" id="dre:503608"/>
<dbReference type="AGR" id="ZFIN:ZDB-GENE-050227-20"/>
<dbReference type="CTD" id="69668"/>
<dbReference type="ZFIN" id="ZDB-GENE-050227-20">
    <property type="gene designation" value="vma22"/>
</dbReference>
<dbReference type="eggNOG" id="ENOG502S392">
    <property type="taxonomic scope" value="Eukaryota"/>
</dbReference>
<dbReference type="InParanoid" id="Q5EAR6"/>
<dbReference type="OrthoDB" id="408631at2759"/>
<dbReference type="PhylomeDB" id="Q5EAR6"/>
<dbReference type="PRO" id="PR:Q5EAR6"/>
<dbReference type="Proteomes" id="UP000000437">
    <property type="component" value="Alternate scaffold 23"/>
</dbReference>
<dbReference type="Proteomes" id="UP000000437">
    <property type="component" value="Chromosome 23"/>
</dbReference>
<dbReference type="GO" id="GO:0030137">
    <property type="term" value="C:COPI-coated vesicle"/>
    <property type="evidence" value="ECO:0007669"/>
    <property type="project" value="UniProtKB-SubCell"/>
</dbReference>
<dbReference type="GO" id="GO:0005783">
    <property type="term" value="C:endoplasmic reticulum"/>
    <property type="evidence" value="ECO:0000250"/>
    <property type="project" value="UniProtKB"/>
</dbReference>
<dbReference type="GO" id="GO:0005793">
    <property type="term" value="C:endoplasmic reticulum-Golgi intermediate compartment"/>
    <property type="evidence" value="ECO:0007669"/>
    <property type="project" value="UniProtKB-SubCell"/>
</dbReference>
<dbReference type="GO" id="GO:0005768">
    <property type="term" value="C:endosome"/>
    <property type="evidence" value="ECO:0007669"/>
    <property type="project" value="UniProtKB-SubCell"/>
</dbReference>
<dbReference type="GO" id="GO:0005764">
    <property type="term" value="C:lysosome"/>
    <property type="evidence" value="ECO:0007669"/>
    <property type="project" value="UniProtKB-SubCell"/>
</dbReference>
<dbReference type="GO" id="GO:0016471">
    <property type="term" value="C:vacuolar proton-transporting V-type ATPase complex"/>
    <property type="evidence" value="ECO:0000250"/>
    <property type="project" value="UniProtKB"/>
</dbReference>
<dbReference type="GO" id="GO:0051082">
    <property type="term" value="F:unfolded protein binding"/>
    <property type="evidence" value="ECO:0000318"/>
    <property type="project" value="GO_Central"/>
</dbReference>
<dbReference type="GO" id="GO:0006879">
    <property type="term" value="P:intracellular iron ion homeostasis"/>
    <property type="evidence" value="ECO:0000250"/>
    <property type="project" value="UniProtKB"/>
</dbReference>
<dbReference type="GO" id="GO:0070072">
    <property type="term" value="P:vacuolar proton-transporting V-type ATPase complex assembly"/>
    <property type="evidence" value="ECO:0007669"/>
    <property type="project" value="InterPro"/>
</dbReference>
<dbReference type="FunFam" id="1.10.287.3240:FF:000005">
    <property type="entry name" value="coiled-coil domain-containing protein 115"/>
    <property type="match status" value="1"/>
</dbReference>
<dbReference type="Gene3D" id="1.10.287.3240">
    <property type="match status" value="1"/>
</dbReference>
<dbReference type="InterPro" id="IPR040357">
    <property type="entry name" value="Vma22/CCDC115"/>
</dbReference>
<dbReference type="PANTHER" id="PTHR31996">
    <property type="entry name" value="COILED-COIL DOMAIN-CONTAINING PROTEIN 115"/>
    <property type="match status" value="1"/>
</dbReference>
<dbReference type="PANTHER" id="PTHR31996:SF2">
    <property type="entry name" value="COILED-COIL DOMAIN-CONTAINING PROTEIN 115"/>
    <property type="match status" value="1"/>
</dbReference>
<dbReference type="Pfam" id="PF21730">
    <property type="entry name" value="Vma22_CCDC115"/>
    <property type="match status" value="1"/>
</dbReference>
<sequence length="206" mass="23775">MRVDENLRLDEQLLLFMEQLEALEEKRQRLNSLIEEGWFSIAKARYSMGNKQVSALQYASEMQPLAHVETSLLEGGTAEFKCERSENKAEEQKTKTIEDIGAKETGLRRRVHTKQKEVKEGEQDTDEVKTKTDSPTPEHRNPLKWFGILVPQNLKQAQSAFKEVITLSVEIASLQSTILATRKEMQVQMKEKQERTEKAQLEVKEE</sequence>
<organism>
    <name type="scientific">Danio rerio</name>
    <name type="common">Zebrafish</name>
    <name type="synonym">Brachydanio rerio</name>
    <dbReference type="NCBI Taxonomy" id="7955"/>
    <lineage>
        <taxon>Eukaryota</taxon>
        <taxon>Metazoa</taxon>
        <taxon>Chordata</taxon>
        <taxon>Craniata</taxon>
        <taxon>Vertebrata</taxon>
        <taxon>Euteleostomi</taxon>
        <taxon>Actinopterygii</taxon>
        <taxon>Neopterygii</taxon>
        <taxon>Teleostei</taxon>
        <taxon>Ostariophysi</taxon>
        <taxon>Cypriniformes</taxon>
        <taxon>Danionidae</taxon>
        <taxon>Danioninae</taxon>
        <taxon>Danio</taxon>
    </lineage>
</organism>
<evidence type="ECO:0000250" key="1">
    <source>
        <dbReference type="UniProtKB" id="Q8VE99"/>
    </source>
</evidence>
<evidence type="ECO:0000250" key="2">
    <source>
        <dbReference type="UniProtKB" id="Q96NT0"/>
    </source>
</evidence>
<evidence type="ECO:0000255" key="3"/>
<evidence type="ECO:0000256" key="4">
    <source>
        <dbReference type="SAM" id="MobiDB-lite"/>
    </source>
</evidence>
<reference key="1">
    <citation type="submission" date="2005-02" db="EMBL/GenBank/DDBJ databases">
        <authorList>
            <consortium name="NIH - Zebrafish Gene Collection (ZGC) project"/>
        </authorList>
    </citation>
    <scope>NUCLEOTIDE SEQUENCE [LARGE SCALE MRNA]</scope>
    <source>
        <tissue>Embryo</tissue>
    </source>
</reference>
<protein>
    <recommendedName>
        <fullName>Vacuolar ATPase assembly protein VMA22</fullName>
    </recommendedName>
    <alternativeName>
        <fullName>Coiled-coil domain-containing protein 115</fullName>
    </alternativeName>
</protein>
<name>VMA22_DANRE</name>
<accession>Q5EAR6</accession>